<gene>
    <name type="primary">ABCG21</name>
    <name type="synonym">WBC21</name>
    <name type="ordered locus">At3g25620</name>
    <name type="ORF">T5M7.6</name>
</gene>
<protein>
    <recommendedName>
        <fullName>ABC transporter G family member 21</fullName>
        <shortName>ABC transporter ABCG.21</shortName>
        <shortName>AtABCG21</shortName>
    </recommendedName>
    <alternativeName>
        <fullName>White-brown complex homolog protein 21</fullName>
        <shortName>AtWBC21</shortName>
    </alternativeName>
</protein>
<reference key="1">
    <citation type="journal article" date="2000" name="DNA Res.">
        <title>Structural analysis of Arabidopsis thaliana chromosome 3. II. Sequence features of the 4,251,695 bp regions covered by 90 P1, TAC and BAC clones.</title>
        <authorList>
            <person name="Kaneko T."/>
            <person name="Katoh T."/>
            <person name="Sato S."/>
            <person name="Nakamura Y."/>
            <person name="Asamizu E."/>
            <person name="Tabata S."/>
        </authorList>
    </citation>
    <scope>NUCLEOTIDE SEQUENCE [LARGE SCALE GENOMIC DNA]</scope>
    <source>
        <strain>cv. Columbia</strain>
    </source>
</reference>
<reference key="2">
    <citation type="journal article" date="2017" name="Plant J.">
        <title>Araport11: a complete reannotation of the Arabidopsis thaliana reference genome.</title>
        <authorList>
            <person name="Cheng C.Y."/>
            <person name="Krishnakumar V."/>
            <person name="Chan A.P."/>
            <person name="Thibaud-Nissen F."/>
            <person name="Schobel S."/>
            <person name="Town C.D."/>
        </authorList>
    </citation>
    <scope>GENOME REANNOTATION</scope>
    <source>
        <strain>cv. Columbia</strain>
    </source>
</reference>
<reference key="3">
    <citation type="journal article" date="2003" name="Science">
        <title>Empirical analysis of transcriptional activity in the Arabidopsis genome.</title>
        <authorList>
            <person name="Yamada K."/>
            <person name="Lim J."/>
            <person name="Dale J.M."/>
            <person name="Chen H."/>
            <person name="Shinn P."/>
            <person name="Palm C.J."/>
            <person name="Southwick A.M."/>
            <person name="Wu H.C."/>
            <person name="Kim C.J."/>
            <person name="Nguyen M."/>
            <person name="Pham P.K."/>
            <person name="Cheuk R.F."/>
            <person name="Karlin-Newmann G."/>
            <person name="Liu S.X."/>
            <person name="Lam B."/>
            <person name="Sakano H."/>
            <person name="Wu T."/>
            <person name="Yu G."/>
            <person name="Miranda M."/>
            <person name="Quach H.L."/>
            <person name="Tripp M."/>
            <person name="Chang C.H."/>
            <person name="Lee J.M."/>
            <person name="Toriumi M.J."/>
            <person name="Chan M.M."/>
            <person name="Tang C.C."/>
            <person name="Onodera C.S."/>
            <person name="Deng J.M."/>
            <person name="Akiyama K."/>
            <person name="Ansari Y."/>
            <person name="Arakawa T."/>
            <person name="Banh J."/>
            <person name="Banno F."/>
            <person name="Bowser L."/>
            <person name="Brooks S.Y."/>
            <person name="Carninci P."/>
            <person name="Chao Q."/>
            <person name="Choy N."/>
            <person name="Enju A."/>
            <person name="Goldsmith A.D."/>
            <person name="Gurjal M."/>
            <person name="Hansen N.F."/>
            <person name="Hayashizaki Y."/>
            <person name="Johnson-Hopson C."/>
            <person name="Hsuan V.W."/>
            <person name="Iida K."/>
            <person name="Karnes M."/>
            <person name="Khan S."/>
            <person name="Koesema E."/>
            <person name="Ishida J."/>
            <person name="Jiang P.X."/>
            <person name="Jones T."/>
            <person name="Kawai J."/>
            <person name="Kamiya A."/>
            <person name="Meyers C."/>
            <person name="Nakajima M."/>
            <person name="Narusaka M."/>
            <person name="Seki M."/>
            <person name="Sakurai T."/>
            <person name="Satou M."/>
            <person name="Tamse R."/>
            <person name="Vaysberg M."/>
            <person name="Wallender E.K."/>
            <person name="Wong C."/>
            <person name="Yamamura Y."/>
            <person name="Yuan S."/>
            <person name="Shinozaki K."/>
            <person name="Davis R.W."/>
            <person name="Theologis A."/>
            <person name="Ecker J.R."/>
        </authorList>
    </citation>
    <scope>NUCLEOTIDE SEQUENCE [LARGE SCALE MRNA] (ISOFORM 2)</scope>
    <source>
        <strain>cv. Columbia</strain>
    </source>
</reference>
<reference key="4">
    <citation type="journal article" date="2001" name="J. Biol. Chem.">
        <title>The Arabidopsis thaliana ABC protein superfamily, a complete inventory.</title>
        <authorList>
            <person name="Sanchez-Fernandez R."/>
            <person name="Davies T.G."/>
            <person name="Coleman J.O."/>
            <person name="Rea P.A."/>
        </authorList>
    </citation>
    <scope>GENE FAMILY</scope>
    <scope>NOMENCLATURE</scope>
</reference>
<reference key="5">
    <citation type="journal article" date="2008" name="Trends Plant Sci.">
        <title>Plant ABC proteins - a unified nomenclature and updated inventory.</title>
        <authorList>
            <person name="Verrier P.J."/>
            <person name="Bird D."/>
            <person name="Burla B."/>
            <person name="Dassa E."/>
            <person name="Forestier C."/>
            <person name="Geisler M."/>
            <person name="Klein M."/>
            <person name="Kolukisaoglu H.U."/>
            <person name="Lee Y."/>
            <person name="Martinoia E."/>
            <person name="Murphy A."/>
            <person name="Rea P.A."/>
            <person name="Samuels L."/>
            <person name="Schulz B."/>
            <person name="Spalding E.J."/>
            <person name="Yazaki K."/>
            <person name="Theodoulou F.L."/>
        </authorList>
    </citation>
    <scope>GENE FAMILY</scope>
    <scope>NOMENCLATURE</scope>
</reference>
<proteinExistence type="evidence at transcript level"/>
<feature type="chain" id="PRO_0000240693" description="ABC transporter G family member 21">
    <location>
        <begin position="1"/>
        <end position="672"/>
    </location>
</feature>
<feature type="transmembrane region" description="Helical" evidence="2">
    <location>
        <begin position="429"/>
        <end position="449"/>
    </location>
</feature>
<feature type="transmembrane region" description="Helical" evidence="2">
    <location>
        <begin position="460"/>
        <end position="480"/>
    </location>
</feature>
<feature type="transmembrane region" description="Helical" evidence="2">
    <location>
        <begin position="512"/>
        <end position="532"/>
    </location>
</feature>
<feature type="transmembrane region" description="Helical" evidence="2">
    <location>
        <begin position="543"/>
        <end position="563"/>
    </location>
</feature>
<feature type="transmembrane region" description="Helical" evidence="2">
    <location>
        <begin position="576"/>
        <end position="596"/>
    </location>
</feature>
<feature type="transmembrane region" description="Helical" evidence="2">
    <location>
        <begin position="649"/>
        <end position="669"/>
    </location>
</feature>
<feature type="domain" description="ABC transporter" evidence="3">
    <location>
        <begin position="68"/>
        <end position="322"/>
    </location>
</feature>
<feature type="domain" description="ABC transmembrane type-2">
    <location>
        <begin position="411"/>
        <end position="617"/>
    </location>
</feature>
<feature type="region of interest" description="Disordered" evidence="4">
    <location>
        <begin position="1"/>
        <end position="59"/>
    </location>
</feature>
<feature type="compositionally biased region" description="Polar residues" evidence="4">
    <location>
        <begin position="1"/>
        <end position="35"/>
    </location>
</feature>
<feature type="compositionally biased region" description="Low complexity" evidence="4">
    <location>
        <begin position="50"/>
        <end position="59"/>
    </location>
</feature>
<feature type="binding site" evidence="3">
    <location>
        <begin position="117"/>
        <end position="124"/>
    </location>
    <ligand>
        <name>ATP</name>
        <dbReference type="ChEBI" id="CHEBI:30616"/>
    </ligand>
</feature>
<feature type="splice variant" id="VSP_040638" description="In isoform 2." evidence="5">
    <original>GLLFFFS</original>
    <variation>KQNKPWY</variation>
    <location>
        <begin position="461"/>
        <end position="467"/>
    </location>
</feature>
<feature type="splice variant" id="VSP_040639" description="In isoform 2." evidence="5">
    <location>
        <begin position="468"/>
        <end position="672"/>
    </location>
</feature>
<keyword id="KW-0025">Alternative splicing</keyword>
<keyword id="KW-0067">ATP-binding</keyword>
<keyword id="KW-0472">Membrane</keyword>
<keyword id="KW-0547">Nucleotide-binding</keyword>
<keyword id="KW-1185">Reference proteome</keyword>
<keyword id="KW-0812">Transmembrane</keyword>
<keyword id="KW-1133">Transmembrane helix</keyword>
<keyword id="KW-0813">Transport</keyword>
<organism>
    <name type="scientific">Arabidopsis thaliana</name>
    <name type="common">Mouse-ear cress</name>
    <dbReference type="NCBI Taxonomy" id="3702"/>
    <lineage>
        <taxon>Eukaryota</taxon>
        <taxon>Viridiplantae</taxon>
        <taxon>Streptophyta</taxon>
        <taxon>Embryophyta</taxon>
        <taxon>Tracheophyta</taxon>
        <taxon>Spermatophyta</taxon>
        <taxon>Magnoliopsida</taxon>
        <taxon>eudicotyledons</taxon>
        <taxon>Gunneridae</taxon>
        <taxon>Pentapetalae</taxon>
        <taxon>rosids</taxon>
        <taxon>malvids</taxon>
        <taxon>Brassicales</taxon>
        <taxon>Brassicaceae</taxon>
        <taxon>Camelineae</taxon>
        <taxon>Arabidopsis</taxon>
    </lineage>
</organism>
<evidence type="ECO:0000250" key="1"/>
<evidence type="ECO:0000255" key="2"/>
<evidence type="ECO:0000255" key="3">
    <source>
        <dbReference type="PROSITE-ProRule" id="PRU00434"/>
    </source>
</evidence>
<evidence type="ECO:0000256" key="4">
    <source>
        <dbReference type="SAM" id="MobiDB-lite"/>
    </source>
</evidence>
<evidence type="ECO:0000303" key="5">
    <source>
    </source>
</evidence>
<evidence type="ECO:0000305" key="6"/>
<dbReference type="EMBL" id="AP001313">
    <property type="protein sequence ID" value="BAB03081.1"/>
    <property type="molecule type" value="Genomic_DNA"/>
</dbReference>
<dbReference type="EMBL" id="CP002686">
    <property type="protein sequence ID" value="AEE77043.1"/>
    <property type="molecule type" value="Genomic_DNA"/>
</dbReference>
<dbReference type="EMBL" id="CP002686">
    <property type="protein sequence ID" value="AEE77044.1"/>
    <property type="molecule type" value="Genomic_DNA"/>
</dbReference>
<dbReference type="EMBL" id="AY064994">
    <property type="status" value="NOT_ANNOTATED_CDS"/>
    <property type="molecule type" value="mRNA"/>
</dbReference>
<dbReference type="EMBL" id="BT010173">
    <property type="protein sequence ID" value="AAQ22642.1"/>
    <property type="molecule type" value="mRNA"/>
</dbReference>
<dbReference type="RefSeq" id="NP_001189973.1">
    <molecule id="Q7XA72-1"/>
    <property type="nucleotide sequence ID" value="NM_001203044.2"/>
</dbReference>
<dbReference type="RefSeq" id="NP_189190.2">
    <molecule id="Q7XA72-2"/>
    <property type="nucleotide sequence ID" value="NM_113460.3"/>
</dbReference>
<dbReference type="SMR" id="Q7XA72"/>
<dbReference type="BioGRID" id="7480">
    <property type="interactions" value="2"/>
</dbReference>
<dbReference type="FunCoup" id="Q7XA72">
    <property type="interactions" value="614"/>
</dbReference>
<dbReference type="IntAct" id="Q7XA72">
    <property type="interactions" value="2"/>
</dbReference>
<dbReference type="STRING" id="3702.Q7XA72"/>
<dbReference type="PaxDb" id="3702-AT3G25620.2"/>
<dbReference type="ProteomicsDB" id="245123">
    <molecule id="Q7XA72-1"/>
</dbReference>
<dbReference type="EnsemblPlants" id="AT3G25620.1">
    <molecule id="Q7XA72-2"/>
    <property type="protein sequence ID" value="AT3G25620.1"/>
    <property type="gene ID" value="AT3G25620"/>
</dbReference>
<dbReference type="EnsemblPlants" id="AT3G25620.2">
    <molecule id="Q7XA72-1"/>
    <property type="protein sequence ID" value="AT3G25620.2"/>
    <property type="gene ID" value="AT3G25620"/>
</dbReference>
<dbReference type="GeneID" id="822149"/>
<dbReference type="Gramene" id="AT3G25620.1">
    <molecule id="Q7XA72-2"/>
    <property type="protein sequence ID" value="AT3G25620.1"/>
    <property type="gene ID" value="AT3G25620"/>
</dbReference>
<dbReference type="Gramene" id="AT3G25620.2">
    <molecule id="Q7XA72-1"/>
    <property type="protein sequence ID" value="AT3G25620.2"/>
    <property type="gene ID" value="AT3G25620"/>
</dbReference>
<dbReference type="KEGG" id="ath:AT3G25620"/>
<dbReference type="Araport" id="AT3G25620"/>
<dbReference type="TAIR" id="AT3G25620">
    <property type="gene designation" value="ABCG21"/>
</dbReference>
<dbReference type="eggNOG" id="KOG0061">
    <property type="taxonomic scope" value="Eukaryota"/>
</dbReference>
<dbReference type="HOGENOM" id="CLU_000604_57_10_1"/>
<dbReference type="InParanoid" id="Q7XA72"/>
<dbReference type="OMA" id="WMFFAIS"/>
<dbReference type="PhylomeDB" id="Q7XA72"/>
<dbReference type="PRO" id="PR:Q7XA72"/>
<dbReference type="Proteomes" id="UP000006548">
    <property type="component" value="Chromosome 3"/>
</dbReference>
<dbReference type="ExpressionAtlas" id="Q7XA72">
    <property type="expression patterns" value="baseline and differential"/>
</dbReference>
<dbReference type="GO" id="GO:0016020">
    <property type="term" value="C:membrane"/>
    <property type="evidence" value="ECO:0007669"/>
    <property type="project" value="UniProtKB-SubCell"/>
</dbReference>
<dbReference type="GO" id="GO:0140359">
    <property type="term" value="F:ABC-type transporter activity"/>
    <property type="evidence" value="ECO:0007669"/>
    <property type="project" value="InterPro"/>
</dbReference>
<dbReference type="GO" id="GO:0005524">
    <property type="term" value="F:ATP binding"/>
    <property type="evidence" value="ECO:0007669"/>
    <property type="project" value="UniProtKB-KW"/>
</dbReference>
<dbReference type="GO" id="GO:0016887">
    <property type="term" value="F:ATP hydrolysis activity"/>
    <property type="evidence" value="ECO:0007669"/>
    <property type="project" value="InterPro"/>
</dbReference>
<dbReference type="FunFam" id="3.40.50.300:FF:000337">
    <property type="entry name" value="ABC transporter G family member 22"/>
    <property type="match status" value="1"/>
</dbReference>
<dbReference type="Gene3D" id="3.40.50.300">
    <property type="entry name" value="P-loop containing nucleotide triphosphate hydrolases"/>
    <property type="match status" value="1"/>
</dbReference>
<dbReference type="InterPro" id="IPR003593">
    <property type="entry name" value="AAA+_ATPase"/>
</dbReference>
<dbReference type="InterPro" id="IPR013525">
    <property type="entry name" value="ABC2_TM"/>
</dbReference>
<dbReference type="InterPro" id="IPR003439">
    <property type="entry name" value="ABC_transporter-like_ATP-bd"/>
</dbReference>
<dbReference type="InterPro" id="IPR017871">
    <property type="entry name" value="ABC_transporter-like_CS"/>
</dbReference>
<dbReference type="InterPro" id="IPR043926">
    <property type="entry name" value="ABCG_dom"/>
</dbReference>
<dbReference type="InterPro" id="IPR050352">
    <property type="entry name" value="ABCG_transporters"/>
</dbReference>
<dbReference type="InterPro" id="IPR027417">
    <property type="entry name" value="P-loop_NTPase"/>
</dbReference>
<dbReference type="PANTHER" id="PTHR48041:SF24">
    <property type="entry name" value="ABC TRANSPORTER G FAMILY MEMBER 21"/>
    <property type="match status" value="1"/>
</dbReference>
<dbReference type="PANTHER" id="PTHR48041">
    <property type="entry name" value="ABC TRANSPORTER G FAMILY MEMBER 28"/>
    <property type="match status" value="1"/>
</dbReference>
<dbReference type="Pfam" id="PF01061">
    <property type="entry name" value="ABC2_membrane"/>
    <property type="match status" value="1"/>
</dbReference>
<dbReference type="Pfam" id="PF19055">
    <property type="entry name" value="ABC2_membrane_7"/>
    <property type="match status" value="1"/>
</dbReference>
<dbReference type="Pfam" id="PF00005">
    <property type="entry name" value="ABC_tran"/>
    <property type="match status" value="1"/>
</dbReference>
<dbReference type="SMART" id="SM00382">
    <property type="entry name" value="AAA"/>
    <property type="match status" value="1"/>
</dbReference>
<dbReference type="SUPFAM" id="SSF52540">
    <property type="entry name" value="P-loop containing nucleoside triphosphate hydrolases"/>
    <property type="match status" value="1"/>
</dbReference>
<dbReference type="PROSITE" id="PS00211">
    <property type="entry name" value="ABC_TRANSPORTER_1"/>
    <property type="match status" value="1"/>
</dbReference>
<dbReference type="PROSITE" id="PS50893">
    <property type="entry name" value="ABC_TRANSPORTER_2"/>
    <property type="match status" value="1"/>
</dbReference>
<accession>Q7XA72</accession>
<accession>Q9LI82</accession>
<sequence length="672" mass="75269">MMPPNEQESSFPKTPSANRHETSPVQENRFSSPSHVNPCLDDDNDHDGPSHQSRQSSVLRQSLRPIILKFEELTYSIKSQTGKGSYWFGSQEPKPNRLVLKCVSGIVKPGELLAMLGPSGSGKTTLVTALAGRLQGKLSGTVSYNGEPFTSSVKRKTGFVTQDDVLYPHLTVMETLTYTALLRLPKELTRKEKLEQVEMVVSDLGLTRCCNSVIGGGLIRGISGGERKRVSIGQEMLVNPSLLLLDEPTSGLDSTTAARIVATLRSLARGGRTVVTTIHQPSSRLYRMFDKVLVLSEGCPIYSGDSGRVMEYFGSIGYQPGSSFVNPADFVLDLANGITSDTKQYDQIETNGRLDRLEEQNSVKQSLISSYKKNLYPPLKEEVSRTFPQDQTNARLRKKAITNRWPTSWWMQFSVLLKRGLKERSHESFSGLRIFMVMSVSLLSGLLWWHSRVAHLQDQVGLLFFFSIFWGFFPLFNAIFTFPQERPMLIKERSSGIYRLSSYYIARTVGDLPMELILPTIFVTITYWMGGLKPSLTTFIMTLMIVLYNVLVAQGVGLALGAILMDAKKAATLSSVLMLVFLLAGGYYIQHIPGFIAWLKYVSFSHYCYKLLVGVQYTWDEVYECGSGLHCSVMDYEGIKNLRIGNMMWDVLALAVMLLLYRVLAYLALRNL</sequence>
<comment type="subcellular location">
    <subcellularLocation>
        <location evidence="1">Membrane</location>
        <topology evidence="1">Multi-pass membrane protein</topology>
    </subcellularLocation>
</comment>
<comment type="alternative products">
    <event type="alternative splicing"/>
    <isoform>
        <id>Q7XA72-1</id>
        <name>1</name>
        <sequence type="displayed"/>
    </isoform>
    <isoform>
        <id>Q7XA72-2</id>
        <name>2</name>
        <sequence type="described" ref="VSP_040638 VSP_040639"/>
    </isoform>
</comment>
<comment type="miscellaneous">
    <molecule>Isoform 2</molecule>
    <text evidence="6">May be due to an intron retention.</text>
</comment>
<comment type="similarity">
    <text evidence="6">Belongs to the ABC transporter superfamily. ABCG family. Eye pigment precursor importer (TC 3.A.1.204) subfamily.</text>
</comment>
<name>AB21G_ARATH</name>